<feature type="chain" id="PRO_0000210464" description="Uncharacterized protein MG220 homolog">
    <location>
        <begin position="1"/>
        <end position="90"/>
    </location>
</feature>
<feature type="transmembrane region" description="Helical" evidence="1">
    <location>
        <begin position="12"/>
        <end position="32"/>
    </location>
</feature>
<sequence>MQRLKKSEAKQVVGGLSFWSFSAGVIMIVNAFSTLINTALDISEAANANNANGNGSSYSYKRRNSQKDYFSTGRFRLGLTPGKSSYSFPV</sequence>
<dbReference type="EMBL" id="U00089">
    <property type="protein sequence ID" value="AAB96171.1"/>
    <property type="molecule type" value="Genomic_DNA"/>
</dbReference>
<dbReference type="PIR" id="S73849">
    <property type="entry name" value="S73849"/>
</dbReference>
<dbReference type="RefSeq" id="NP_110001.1">
    <property type="nucleotide sequence ID" value="NC_000912.1"/>
</dbReference>
<dbReference type="RefSeq" id="WP_010874669.1">
    <property type="nucleotide sequence ID" value="NZ_OU342337.1"/>
</dbReference>
<dbReference type="EnsemblBacteria" id="AAB96171">
    <property type="protein sequence ID" value="AAB96171"/>
    <property type="gene ID" value="MPN_313"/>
</dbReference>
<dbReference type="KEGG" id="mpn:MPN_313"/>
<dbReference type="HOGENOM" id="CLU_188377_0_0_14"/>
<dbReference type="OrthoDB" id="9972921at2"/>
<dbReference type="BioCyc" id="MPNE272634:G1GJ3-500-MONOMER"/>
<dbReference type="Proteomes" id="UP000000808">
    <property type="component" value="Chromosome"/>
</dbReference>
<dbReference type="GO" id="GO:0016020">
    <property type="term" value="C:membrane"/>
    <property type="evidence" value="ECO:0007669"/>
    <property type="project" value="UniProtKB-SubCell"/>
</dbReference>
<dbReference type="NCBIfam" id="NF045747">
    <property type="entry name" value="MPN313"/>
    <property type="match status" value="1"/>
</dbReference>
<comment type="subcellular location">
    <subcellularLocation>
        <location evidence="2">Membrane</location>
        <topology evidence="2">Single-pass membrane protein</topology>
    </subcellularLocation>
</comment>
<keyword id="KW-0472">Membrane</keyword>
<keyword id="KW-1185">Reference proteome</keyword>
<keyword id="KW-0812">Transmembrane</keyword>
<keyword id="KW-1133">Transmembrane helix</keyword>
<evidence type="ECO:0000255" key="1"/>
<evidence type="ECO:0000305" key="2"/>
<proteinExistence type="predicted"/>
<protein>
    <recommendedName>
        <fullName>Uncharacterized protein MG220 homolog</fullName>
    </recommendedName>
</protein>
<gene>
    <name type="ordered locus">MPN_313</name>
    <name type="ORF">F10_orf90</name>
    <name type="ORF">MP523</name>
</gene>
<name>Y313_MYCPN</name>
<accession>P75468</accession>
<organism>
    <name type="scientific">Mycoplasma pneumoniae (strain ATCC 29342 / M129 / Subtype 1)</name>
    <name type="common">Mycoplasmoides pneumoniae</name>
    <dbReference type="NCBI Taxonomy" id="272634"/>
    <lineage>
        <taxon>Bacteria</taxon>
        <taxon>Bacillati</taxon>
        <taxon>Mycoplasmatota</taxon>
        <taxon>Mycoplasmoidales</taxon>
        <taxon>Mycoplasmoidaceae</taxon>
        <taxon>Mycoplasmoides</taxon>
    </lineage>
</organism>
<reference key="1">
    <citation type="journal article" date="1996" name="Nucleic Acids Res.">
        <title>Complete sequence analysis of the genome of the bacterium Mycoplasma pneumoniae.</title>
        <authorList>
            <person name="Himmelreich R."/>
            <person name="Hilbert H."/>
            <person name="Plagens H."/>
            <person name="Pirkl E."/>
            <person name="Li B.-C."/>
            <person name="Herrmann R."/>
        </authorList>
    </citation>
    <scope>NUCLEOTIDE SEQUENCE [LARGE SCALE GENOMIC DNA]</scope>
    <source>
        <strain>ATCC 29342 / M129 / Subtype 1</strain>
    </source>
</reference>